<dbReference type="EC" id="6.1.1.10" evidence="1"/>
<dbReference type="EMBL" id="CP000094">
    <property type="protein sequence ID" value="ABA76244.1"/>
    <property type="molecule type" value="Genomic_DNA"/>
</dbReference>
<dbReference type="RefSeq" id="WP_011335728.1">
    <property type="nucleotide sequence ID" value="NC_007492.2"/>
</dbReference>
<dbReference type="SMR" id="Q3K7L0"/>
<dbReference type="KEGG" id="pfo:Pfl01_4507"/>
<dbReference type="eggNOG" id="COG0073">
    <property type="taxonomic scope" value="Bacteria"/>
</dbReference>
<dbReference type="eggNOG" id="COG0143">
    <property type="taxonomic scope" value="Bacteria"/>
</dbReference>
<dbReference type="HOGENOM" id="CLU_009710_7_0_6"/>
<dbReference type="Proteomes" id="UP000002704">
    <property type="component" value="Chromosome"/>
</dbReference>
<dbReference type="GO" id="GO:0005829">
    <property type="term" value="C:cytosol"/>
    <property type="evidence" value="ECO:0007669"/>
    <property type="project" value="TreeGrafter"/>
</dbReference>
<dbReference type="GO" id="GO:0005524">
    <property type="term" value="F:ATP binding"/>
    <property type="evidence" value="ECO:0007669"/>
    <property type="project" value="UniProtKB-UniRule"/>
</dbReference>
<dbReference type="GO" id="GO:0046872">
    <property type="term" value="F:metal ion binding"/>
    <property type="evidence" value="ECO:0007669"/>
    <property type="project" value="UniProtKB-KW"/>
</dbReference>
<dbReference type="GO" id="GO:0004825">
    <property type="term" value="F:methionine-tRNA ligase activity"/>
    <property type="evidence" value="ECO:0007669"/>
    <property type="project" value="UniProtKB-UniRule"/>
</dbReference>
<dbReference type="GO" id="GO:0000049">
    <property type="term" value="F:tRNA binding"/>
    <property type="evidence" value="ECO:0007669"/>
    <property type="project" value="UniProtKB-KW"/>
</dbReference>
<dbReference type="GO" id="GO:0006431">
    <property type="term" value="P:methionyl-tRNA aminoacylation"/>
    <property type="evidence" value="ECO:0007669"/>
    <property type="project" value="UniProtKB-UniRule"/>
</dbReference>
<dbReference type="CDD" id="cd07957">
    <property type="entry name" value="Anticodon_Ia_Met"/>
    <property type="match status" value="1"/>
</dbReference>
<dbReference type="CDD" id="cd00814">
    <property type="entry name" value="MetRS_core"/>
    <property type="match status" value="1"/>
</dbReference>
<dbReference type="CDD" id="cd02800">
    <property type="entry name" value="tRNA_bind_EcMetRS_like"/>
    <property type="match status" value="1"/>
</dbReference>
<dbReference type="FunFam" id="1.10.730.10:FF:000005">
    <property type="entry name" value="Methionine--tRNA ligase"/>
    <property type="match status" value="1"/>
</dbReference>
<dbReference type="FunFam" id="2.20.28.20:FF:000001">
    <property type="entry name" value="Methionine--tRNA ligase"/>
    <property type="match status" value="1"/>
</dbReference>
<dbReference type="FunFam" id="2.40.50.140:FF:000042">
    <property type="entry name" value="Methionine--tRNA ligase"/>
    <property type="match status" value="1"/>
</dbReference>
<dbReference type="Gene3D" id="3.40.50.620">
    <property type="entry name" value="HUPs"/>
    <property type="match status" value="1"/>
</dbReference>
<dbReference type="Gene3D" id="1.10.730.10">
    <property type="entry name" value="Isoleucyl-tRNA Synthetase, Domain 1"/>
    <property type="match status" value="1"/>
</dbReference>
<dbReference type="Gene3D" id="2.20.28.20">
    <property type="entry name" value="Methionyl-tRNA synthetase, Zn-domain"/>
    <property type="match status" value="1"/>
</dbReference>
<dbReference type="Gene3D" id="2.40.50.140">
    <property type="entry name" value="Nucleic acid-binding proteins"/>
    <property type="match status" value="1"/>
</dbReference>
<dbReference type="HAMAP" id="MF_00098">
    <property type="entry name" value="Met_tRNA_synth_type1"/>
    <property type="match status" value="1"/>
</dbReference>
<dbReference type="InterPro" id="IPR001412">
    <property type="entry name" value="aa-tRNA-synth_I_CS"/>
</dbReference>
<dbReference type="InterPro" id="IPR041872">
    <property type="entry name" value="Anticodon_Met"/>
</dbReference>
<dbReference type="InterPro" id="IPR004495">
    <property type="entry name" value="Met-tRNA-synth_bsu_C"/>
</dbReference>
<dbReference type="InterPro" id="IPR023458">
    <property type="entry name" value="Met-tRNA_ligase_1"/>
</dbReference>
<dbReference type="InterPro" id="IPR014758">
    <property type="entry name" value="Met-tRNA_synth"/>
</dbReference>
<dbReference type="InterPro" id="IPR015413">
    <property type="entry name" value="Methionyl/Leucyl_tRNA_Synth"/>
</dbReference>
<dbReference type="InterPro" id="IPR033911">
    <property type="entry name" value="MetRS_core"/>
</dbReference>
<dbReference type="InterPro" id="IPR029038">
    <property type="entry name" value="MetRS_Zn"/>
</dbReference>
<dbReference type="InterPro" id="IPR012340">
    <property type="entry name" value="NA-bd_OB-fold"/>
</dbReference>
<dbReference type="InterPro" id="IPR014729">
    <property type="entry name" value="Rossmann-like_a/b/a_fold"/>
</dbReference>
<dbReference type="InterPro" id="IPR002547">
    <property type="entry name" value="tRNA-bd_dom"/>
</dbReference>
<dbReference type="InterPro" id="IPR009080">
    <property type="entry name" value="tRNAsynth_Ia_anticodon-bd"/>
</dbReference>
<dbReference type="NCBIfam" id="TIGR00398">
    <property type="entry name" value="metG"/>
    <property type="match status" value="1"/>
</dbReference>
<dbReference type="NCBIfam" id="TIGR00399">
    <property type="entry name" value="metG_C_term"/>
    <property type="match status" value="1"/>
</dbReference>
<dbReference type="NCBIfam" id="NF001100">
    <property type="entry name" value="PRK00133.1"/>
    <property type="match status" value="1"/>
</dbReference>
<dbReference type="PANTHER" id="PTHR45765">
    <property type="entry name" value="METHIONINE--TRNA LIGASE"/>
    <property type="match status" value="1"/>
</dbReference>
<dbReference type="PANTHER" id="PTHR45765:SF1">
    <property type="entry name" value="METHIONINE--TRNA LIGASE, CYTOPLASMIC"/>
    <property type="match status" value="1"/>
</dbReference>
<dbReference type="Pfam" id="PF19303">
    <property type="entry name" value="Anticodon_3"/>
    <property type="match status" value="1"/>
</dbReference>
<dbReference type="Pfam" id="PF09334">
    <property type="entry name" value="tRNA-synt_1g"/>
    <property type="match status" value="1"/>
</dbReference>
<dbReference type="Pfam" id="PF01588">
    <property type="entry name" value="tRNA_bind"/>
    <property type="match status" value="1"/>
</dbReference>
<dbReference type="PRINTS" id="PR01041">
    <property type="entry name" value="TRNASYNTHMET"/>
</dbReference>
<dbReference type="SUPFAM" id="SSF47323">
    <property type="entry name" value="Anticodon-binding domain of a subclass of class I aminoacyl-tRNA synthetases"/>
    <property type="match status" value="1"/>
</dbReference>
<dbReference type="SUPFAM" id="SSF57770">
    <property type="entry name" value="Methionyl-tRNA synthetase (MetRS), Zn-domain"/>
    <property type="match status" value="1"/>
</dbReference>
<dbReference type="SUPFAM" id="SSF50249">
    <property type="entry name" value="Nucleic acid-binding proteins"/>
    <property type="match status" value="1"/>
</dbReference>
<dbReference type="SUPFAM" id="SSF52374">
    <property type="entry name" value="Nucleotidylyl transferase"/>
    <property type="match status" value="1"/>
</dbReference>
<dbReference type="PROSITE" id="PS00178">
    <property type="entry name" value="AA_TRNA_LIGASE_I"/>
    <property type="match status" value="1"/>
</dbReference>
<dbReference type="PROSITE" id="PS50886">
    <property type="entry name" value="TRBD"/>
    <property type="match status" value="1"/>
</dbReference>
<evidence type="ECO:0000255" key="1">
    <source>
        <dbReference type="HAMAP-Rule" id="MF_00098"/>
    </source>
</evidence>
<evidence type="ECO:0000256" key="2">
    <source>
        <dbReference type="SAM" id="MobiDB-lite"/>
    </source>
</evidence>
<sequence>MSEPRKILVTSALPYANGSIHLGHMLEYIQTDMWVRFQKHRGNQCIYVCADDAHGSAIMLRAEKEGITPEQLIANVQAEHSADFAEFLVDFDNFHSTHAEENRELSSQIYLKLRDAGHIAQRSITQYFDPEKKMFLADRFIKGTCPKCGTEDQYGDNCEKCGATYAPTDLKDPKSAISGATPVLKDSQHFFFKLPDFQEMLQAWTRSGTLQDAVANKIAEWLDAGLQQWDISRDAPYFGFEIPGEPGKYFYVWLDAPIGYMASFKNLCNRTPELDFDAFWGKDSTAELYHFIGKDIVNFHALFWPAMLEGAGFRKPTGINVHGYLTVNGQKMSKSRGTFIKARTYLDHLSPEYLRYYYAAKLGRGVDDLDLNLEDFVQKVNSDLVGKVVNIASRCAGFIQKGNAGLLVDTNAAPELTEAFLAAAPSIADAYEARDFARAMRETMALADRANAWIADKAPWSLNKQEGKQDEVQAVCATAINLFRQLVIFLKPVLPVLAADAEAFLNVAPLTWNDHTTLLANHQLNEFKPLMTRIDPVKVQAMTDASKEDLTASQTDTGAAAPAGNGELAKDPLSPEIDFDTFAAVDLRVALIVKAEHVEGADKLLRLTLDIGDEQRNVFSGIKSAYPDPSKLDGRLTMMIANLKPRKMKFGISEGMVMAAGPGGEEIYLLSPDSGAKPGQRIK</sequence>
<accession>Q3K7L0</accession>
<feature type="chain" id="PRO_0000331871" description="Methionine--tRNA ligase">
    <location>
        <begin position="1"/>
        <end position="683"/>
    </location>
</feature>
<feature type="domain" description="tRNA-binding" evidence="1">
    <location>
        <begin position="581"/>
        <end position="683"/>
    </location>
</feature>
<feature type="region of interest" description="Disordered" evidence="2">
    <location>
        <begin position="545"/>
        <end position="572"/>
    </location>
</feature>
<feature type="short sequence motif" description="'HIGH' region">
    <location>
        <begin position="14"/>
        <end position="24"/>
    </location>
</feature>
<feature type="short sequence motif" description="'KMSKS' region">
    <location>
        <begin position="331"/>
        <end position="335"/>
    </location>
</feature>
<feature type="binding site" evidence="1">
    <location>
        <position position="145"/>
    </location>
    <ligand>
        <name>Zn(2+)</name>
        <dbReference type="ChEBI" id="CHEBI:29105"/>
    </ligand>
</feature>
<feature type="binding site" evidence="1">
    <location>
        <position position="148"/>
    </location>
    <ligand>
        <name>Zn(2+)</name>
        <dbReference type="ChEBI" id="CHEBI:29105"/>
    </ligand>
</feature>
<feature type="binding site" evidence="1">
    <location>
        <position position="158"/>
    </location>
    <ligand>
        <name>Zn(2+)</name>
        <dbReference type="ChEBI" id="CHEBI:29105"/>
    </ligand>
</feature>
<feature type="binding site" evidence="1">
    <location>
        <position position="161"/>
    </location>
    <ligand>
        <name>Zn(2+)</name>
        <dbReference type="ChEBI" id="CHEBI:29105"/>
    </ligand>
</feature>
<feature type="binding site" evidence="1">
    <location>
        <position position="334"/>
    </location>
    <ligand>
        <name>ATP</name>
        <dbReference type="ChEBI" id="CHEBI:30616"/>
    </ligand>
</feature>
<keyword id="KW-0030">Aminoacyl-tRNA synthetase</keyword>
<keyword id="KW-0067">ATP-binding</keyword>
<keyword id="KW-0963">Cytoplasm</keyword>
<keyword id="KW-0436">Ligase</keyword>
<keyword id="KW-0479">Metal-binding</keyword>
<keyword id="KW-0547">Nucleotide-binding</keyword>
<keyword id="KW-0648">Protein biosynthesis</keyword>
<keyword id="KW-0694">RNA-binding</keyword>
<keyword id="KW-0820">tRNA-binding</keyword>
<keyword id="KW-0862">Zinc</keyword>
<proteinExistence type="inferred from homology"/>
<protein>
    <recommendedName>
        <fullName evidence="1">Methionine--tRNA ligase</fullName>
        <ecNumber evidence="1">6.1.1.10</ecNumber>
    </recommendedName>
    <alternativeName>
        <fullName evidence="1">Methionyl-tRNA synthetase</fullName>
        <shortName evidence="1">MetRS</shortName>
    </alternativeName>
</protein>
<reference key="1">
    <citation type="journal article" date="2009" name="Genome Biol.">
        <title>Genomic and genetic analyses of diversity and plant interactions of Pseudomonas fluorescens.</title>
        <authorList>
            <person name="Silby M.W."/>
            <person name="Cerdeno-Tarraga A.M."/>
            <person name="Vernikos G.S."/>
            <person name="Giddens S.R."/>
            <person name="Jackson R.W."/>
            <person name="Preston G.M."/>
            <person name="Zhang X.-X."/>
            <person name="Moon C.D."/>
            <person name="Gehrig S.M."/>
            <person name="Godfrey S.A.C."/>
            <person name="Knight C.G."/>
            <person name="Malone J.G."/>
            <person name="Robinson Z."/>
            <person name="Spiers A.J."/>
            <person name="Harris S."/>
            <person name="Challis G.L."/>
            <person name="Yaxley A.M."/>
            <person name="Harris D."/>
            <person name="Seeger K."/>
            <person name="Murphy L."/>
            <person name="Rutter S."/>
            <person name="Squares R."/>
            <person name="Quail M.A."/>
            <person name="Saunders E."/>
            <person name="Mavromatis K."/>
            <person name="Brettin T.S."/>
            <person name="Bentley S.D."/>
            <person name="Hothersall J."/>
            <person name="Stephens E."/>
            <person name="Thomas C.M."/>
            <person name="Parkhill J."/>
            <person name="Levy S.B."/>
            <person name="Rainey P.B."/>
            <person name="Thomson N.R."/>
        </authorList>
    </citation>
    <scope>NUCLEOTIDE SEQUENCE [LARGE SCALE GENOMIC DNA]</scope>
    <source>
        <strain>Pf0-1</strain>
    </source>
</reference>
<gene>
    <name evidence="1" type="primary">metG</name>
    <name type="ordered locus">Pfl01_4507</name>
</gene>
<name>SYM_PSEPF</name>
<organism>
    <name type="scientific">Pseudomonas fluorescens (strain Pf0-1)</name>
    <dbReference type="NCBI Taxonomy" id="205922"/>
    <lineage>
        <taxon>Bacteria</taxon>
        <taxon>Pseudomonadati</taxon>
        <taxon>Pseudomonadota</taxon>
        <taxon>Gammaproteobacteria</taxon>
        <taxon>Pseudomonadales</taxon>
        <taxon>Pseudomonadaceae</taxon>
        <taxon>Pseudomonas</taxon>
    </lineage>
</organism>
<comment type="function">
    <text evidence="1">Is required not only for elongation of protein synthesis but also for the initiation of all mRNA translation through initiator tRNA(fMet) aminoacylation.</text>
</comment>
<comment type="catalytic activity">
    <reaction evidence="1">
        <text>tRNA(Met) + L-methionine + ATP = L-methionyl-tRNA(Met) + AMP + diphosphate</text>
        <dbReference type="Rhea" id="RHEA:13481"/>
        <dbReference type="Rhea" id="RHEA-COMP:9667"/>
        <dbReference type="Rhea" id="RHEA-COMP:9698"/>
        <dbReference type="ChEBI" id="CHEBI:30616"/>
        <dbReference type="ChEBI" id="CHEBI:33019"/>
        <dbReference type="ChEBI" id="CHEBI:57844"/>
        <dbReference type="ChEBI" id="CHEBI:78442"/>
        <dbReference type="ChEBI" id="CHEBI:78530"/>
        <dbReference type="ChEBI" id="CHEBI:456215"/>
        <dbReference type="EC" id="6.1.1.10"/>
    </reaction>
</comment>
<comment type="cofactor">
    <cofactor evidence="1">
        <name>Zn(2+)</name>
        <dbReference type="ChEBI" id="CHEBI:29105"/>
    </cofactor>
    <text evidence="1">Binds 1 zinc ion per subunit.</text>
</comment>
<comment type="subunit">
    <text evidence="1">Homodimer.</text>
</comment>
<comment type="subcellular location">
    <subcellularLocation>
        <location evidence="1">Cytoplasm</location>
    </subcellularLocation>
</comment>
<comment type="similarity">
    <text evidence="1">Belongs to the class-I aminoacyl-tRNA synthetase family. MetG type 1 subfamily.</text>
</comment>